<name>QUEE_BRADU</name>
<protein>
    <recommendedName>
        <fullName evidence="1">7-carboxy-7-deazaguanine synthase</fullName>
        <shortName evidence="1">CDG synthase</shortName>
        <ecNumber evidence="1">4.3.99.3</ecNumber>
    </recommendedName>
    <alternativeName>
        <fullName evidence="1">Queuosine biosynthesis protein QueE</fullName>
    </alternativeName>
</protein>
<accession>Q89SC0</accession>
<comment type="function">
    <text evidence="1">Catalyzes the complex heterocyclic radical-mediated conversion of 6-carboxy-5,6,7,8-tetrahydropterin (CPH4) to 7-carboxy-7-deazaguanine (CDG), a step common to the biosynthetic pathways of all 7-deazapurine-containing compounds.</text>
</comment>
<comment type="catalytic activity">
    <reaction evidence="1">
        <text>6-carboxy-5,6,7,8-tetrahydropterin + H(+) = 7-carboxy-7-deazaguanine + NH4(+)</text>
        <dbReference type="Rhea" id="RHEA:27974"/>
        <dbReference type="ChEBI" id="CHEBI:15378"/>
        <dbReference type="ChEBI" id="CHEBI:28938"/>
        <dbReference type="ChEBI" id="CHEBI:61032"/>
        <dbReference type="ChEBI" id="CHEBI:61036"/>
        <dbReference type="EC" id="4.3.99.3"/>
    </reaction>
</comment>
<comment type="cofactor">
    <cofactor evidence="1">
        <name>[4Fe-4S] cluster</name>
        <dbReference type="ChEBI" id="CHEBI:49883"/>
    </cofactor>
    <text evidence="1">Binds 1 [4Fe-4S] cluster. The cluster is coordinated with 3 cysteines and an exchangeable S-adenosyl-L-methionine.</text>
</comment>
<comment type="cofactor">
    <cofactor evidence="1">
        <name>S-adenosyl-L-methionine</name>
        <dbReference type="ChEBI" id="CHEBI:59789"/>
    </cofactor>
    <text evidence="1">Binds 1 S-adenosyl-L-methionine per subunit.</text>
</comment>
<comment type="cofactor">
    <cofactor evidence="1">
        <name>Mg(2+)</name>
        <dbReference type="ChEBI" id="CHEBI:18420"/>
    </cofactor>
</comment>
<comment type="pathway">
    <text evidence="1">Purine metabolism; 7-cyano-7-deazaguanine biosynthesis.</text>
</comment>
<comment type="subunit">
    <text evidence="1">Homodimer.</text>
</comment>
<comment type="similarity">
    <text evidence="1">Belongs to the radical SAM superfamily. 7-carboxy-7-deazaguanine synthase family.</text>
</comment>
<proteinExistence type="inferred from homology"/>
<feature type="chain" id="PRO_0000416198" description="7-carboxy-7-deazaguanine synthase">
    <location>
        <begin position="1"/>
        <end position="210"/>
    </location>
</feature>
<feature type="domain" description="Radical SAM core" evidence="2">
    <location>
        <begin position="18"/>
        <end position="210"/>
    </location>
</feature>
<feature type="binding site" evidence="1">
    <location>
        <begin position="12"/>
        <end position="14"/>
    </location>
    <ligand>
        <name>substrate</name>
    </ligand>
</feature>
<feature type="binding site" evidence="1">
    <location>
        <position position="27"/>
    </location>
    <ligand>
        <name>substrate</name>
    </ligand>
</feature>
<feature type="binding site" evidence="1">
    <location>
        <position position="31"/>
    </location>
    <ligand>
        <name>[4Fe-4S] cluster</name>
        <dbReference type="ChEBI" id="CHEBI:49883"/>
        <note>4Fe-4S-S-AdoMet</note>
    </ligand>
</feature>
<feature type="binding site" evidence="1">
    <location>
        <position position="46"/>
    </location>
    <ligand>
        <name>[4Fe-4S] cluster</name>
        <dbReference type="ChEBI" id="CHEBI:49883"/>
        <note>4Fe-4S-S-AdoMet</note>
    </ligand>
</feature>
<feature type="binding site" evidence="1">
    <location>
        <position position="49"/>
    </location>
    <ligand>
        <name>[4Fe-4S] cluster</name>
        <dbReference type="ChEBI" id="CHEBI:49883"/>
        <note>4Fe-4S-S-AdoMet</note>
    </ligand>
</feature>
<feature type="binding site" evidence="1">
    <location>
        <position position="51"/>
    </location>
    <ligand>
        <name>Mg(2+)</name>
        <dbReference type="ChEBI" id="CHEBI:18420"/>
    </ligand>
</feature>
<feature type="binding site" evidence="1">
    <location>
        <position position="90"/>
    </location>
    <ligand>
        <name>substrate</name>
    </ligand>
</feature>
<feature type="binding site" evidence="1">
    <location>
        <position position="92"/>
    </location>
    <ligand>
        <name>S-adenosyl-L-methionine</name>
        <dbReference type="ChEBI" id="CHEBI:59789"/>
    </ligand>
</feature>
<feature type="binding site" evidence="1">
    <location>
        <begin position="133"/>
        <end position="135"/>
    </location>
    <ligand>
        <name>S-adenosyl-L-methionine</name>
        <dbReference type="ChEBI" id="CHEBI:59789"/>
    </ligand>
</feature>
<feature type="binding site" evidence="1">
    <location>
        <begin position="173"/>
        <end position="176"/>
    </location>
    <ligand>
        <name>S-adenosyl-L-methionine</name>
        <dbReference type="ChEBI" id="CHEBI:59789"/>
    </ligand>
</feature>
<gene>
    <name evidence="1" type="primary">queE</name>
    <name type="ordered locus">bll2483</name>
</gene>
<dbReference type="EC" id="4.3.99.3" evidence="1"/>
<dbReference type="EMBL" id="BA000040">
    <property type="protein sequence ID" value="BAC47748.1"/>
    <property type="molecule type" value="Genomic_DNA"/>
</dbReference>
<dbReference type="RefSeq" id="NP_769123.1">
    <property type="nucleotide sequence ID" value="NC_004463.1"/>
</dbReference>
<dbReference type="RefSeq" id="WP_011085270.1">
    <property type="nucleotide sequence ID" value="NC_004463.1"/>
</dbReference>
<dbReference type="SMR" id="Q89SC0"/>
<dbReference type="FunCoup" id="Q89SC0">
    <property type="interactions" value="142"/>
</dbReference>
<dbReference type="STRING" id="224911.AAV28_09340"/>
<dbReference type="EnsemblBacteria" id="BAC47748">
    <property type="protein sequence ID" value="BAC47748"/>
    <property type="gene ID" value="BAC47748"/>
</dbReference>
<dbReference type="GeneID" id="46489522"/>
<dbReference type="KEGG" id="bja:bll2483"/>
<dbReference type="PATRIC" id="fig|224911.44.peg.2054"/>
<dbReference type="eggNOG" id="COG0602">
    <property type="taxonomic scope" value="Bacteria"/>
</dbReference>
<dbReference type="HOGENOM" id="CLU_066739_0_1_5"/>
<dbReference type="InParanoid" id="Q89SC0"/>
<dbReference type="OrthoDB" id="9792276at2"/>
<dbReference type="PhylomeDB" id="Q89SC0"/>
<dbReference type="UniPathway" id="UPA00391"/>
<dbReference type="Proteomes" id="UP000002526">
    <property type="component" value="Chromosome"/>
</dbReference>
<dbReference type="GO" id="GO:0051539">
    <property type="term" value="F:4 iron, 4 sulfur cluster binding"/>
    <property type="evidence" value="ECO:0007669"/>
    <property type="project" value="UniProtKB-UniRule"/>
</dbReference>
<dbReference type="GO" id="GO:0016840">
    <property type="term" value="F:carbon-nitrogen lyase activity"/>
    <property type="evidence" value="ECO:0007669"/>
    <property type="project" value="UniProtKB-UniRule"/>
</dbReference>
<dbReference type="GO" id="GO:0000287">
    <property type="term" value="F:magnesium ion binding"/>
    <property type="evidence" value="ECO:0007669"/>
    <property type="project" value="UniProtKB-UniRule"/>
</dbReference>
<dbReference type="GO" id="GO:1904047">
    <property type="term" value="F:S-adenosyl-L-methionine binding"/>
    <property type="evidence" value="ECO:0007669"/>
    <property type="project" value="UniProtKB-UniRule"/>
</dbReference>
<dbReference type="GO" id="GO:0008616">
    <property type="term" value="P:queuosine biosynthetic process"/>
    <property type="evidence" value="ECO:0007669"/>
    <property type="project" value="UniProtKB-UniRule"/>
</dbReference>
<dbReference type="CDD" id="cd01335">
    <property type="entry name" value="Radical_SAM"/>
    <property type="match status" value="1"/>
</dbReference>
<dbReference type="Gene3D" id="3.20.20.70">
    <property type="entry name" value="Aldolase class I"/>
    <property type="match status" value="1"/>
</dbReference>
<dbReference type="HAMAP" id="MF_00917">
    <property type="entry name" value="QueE"/>
    <property type="match status" value="1"/>
</dbReference>
<dbReference type="InterPro" id="IPR024924">
    <property type="entry name" value="7-CO-7-deazaguanine_synth-like"/>
</dbReference>
<dbReference type="InterPro" id="IPR013785">
    <property type="entry name" value="Aldolase_TIM"/>
</dbReference>
<dbReference type="InterPro" id="IPR030977">
    <property type="entry name" value="QueE_Cx14CxxC"/>
</dbReference>
<dbReference type="InterPro" id="IPR007197">
    <property type="entry name" value="rSAM"/>
</dbReference>
<dbReference type="NCBIfam" id="TIGR04508">
    <property type="entry name" value="queE_Cx14CxxC"/>
    <property type="match status" value="1"/>
</dbReference>
<dbReference type="PANTHER" id="PTHR42836">
    <property type="entry name" value="7-CARBOXY-7-DEAZAGUANINE SYNTHASE"/>
    <property type="match status" value="1"/>
</dbReference>
<dbReference type="PANTHER" id="PTHR42836:SF1">
    <property type="entry name" value="7-CARBOXY-7-DEAZAGUANINE SYNTHASE"/>
    <property type="match status" value="1"/>
</dbReference>
<dbReference type="Pfam" id="PF04055">
    <property type="entry name" value="Radical_SAM"/>
    <property type="match status" value="1"/>
</dbReference>
<dbReference type="PIRSF" id="PIRSF000370">
    <property type="entry name" value="QueE"/>
    <property type="match status" value="1"/>
</dbReference>
<dbReference type="SFLD" id="SFLDF00376">
    <property type="entry name" value="7-carboxy-7-deazaguanine_synth"/>
    <property type="match status" value="1"/>
</dbReference>
<dbReference type="SFLD" id="SFLDS00029">
    <property type="entry name" value="Radical_SAM"/>
    <property type="match status" value="1"/>
</dbReference>
<dbReference type="SUPFAM" id="SSF102114">
    <property type="entry name" value="Radical SAM enzymes"/>
    <property type="match status" value="1"/>
</dbReference>
<dbReference type="PROSITE" id="PS51918">
    <property type="entry name" value="RADICAL_SAM"/>
    <property type="match status" value="1"/>
</dbReference>
<keyword id="KW-0004">4Fe-4S</keyword>
<keyword id="KW-0408">Iron</keyword>
<keyword id="KW-0411">Iron-sulfur</keyword>
<keyword id="KW-0456">Lyase</keyword>
<keyword id="KW-0460">Magnesium</keyword>
<keyword id="KW-0479">Metal-binding</keyword>
<keyword id="KW-0671">Queuosine biosynthesis</keyword>
<keyword id="KW-1185">Reference proteome</keyword>
<keyword id="KW-0949">S-adenosyl-L-methionine</keyword>
<sequence length="210" mass="22820">MSYAVKEIFLTLQGEGAHAGRASVFCRFAGCNLWSGREADRQDATCKFCDTDFVGTDGTLGGRYASAVELADTIAAQWTASNDNRYVVLTGGEPLLQVDDALIDALHARGFEIGVETNGTIAAPDGLDWICVSPKGGSELVLRRGHELKLVYPQALAAPETFEGLAFERFSLQPMDGPEVAENTARAIDYCLRHPQWRLSVQTHKSLGIR</sequence>
<organism>
    <name type="scientific">Bradyrhizobium diazoefficiens (strain JCM 10833 / BCRC 13528 / IAM 13628 / NBRC 14792 / USDA 110)</name>
    <dbReference type="NCBI Taxonomy" id="224911"/>
    <lineage>
        <taxon>Bacteria</taxon>
        <taxon>Pseudomonadati</taxon>
        <taxon>Pseudomonadota</taxon>
        <taxon>Alphaproteobacteria</taxon>
        <taxon>Hyphomicrobiales</taxon>
        <taxon>Nitrobacteraceae</taxon>
        <taxon>Bradyrhizobium</taxon>
    </lineage>
</organism>
<evidence type="ECO:0000255" key="1">
    <source>
        <dbReference type="HAMAP-Rule" id="MF_00917"/>
    </source>
</evidence>
<evidence type="ECO:0000255" key="2">
    <source>
        <dbReference type="PROSITE-ProRule" id="PRU01266"/>
    </source>
</evidence>
<reference key="1">
    <citation type="journal article" date="2002" name="DNA Res.">
        <title>Complete genomic sequence of nitrogen-fixing symbiotic bacterium Bradyrhizobium japonicum USDA110.</title>
        <authorList>
            <person name="Kaneko T."/>
            <person name="Nakamura Y."/>
            <person name="Sato S."/>
            <person name="Minamisawa K."/>
            <person name="Uchiumi T."/>
            <person name="Sasamoto S."/>
            <person name="Watanabe A."/>
            <person name="Idesawa K."/>
            <person name="Iriguchi M."/>
            <person name="Kawashima K."/>
            <person name="Kohara M."/>
            <person name="Matsumoto M."/>
            <person name="Shimpo S."/>
            <person name="Tsuruoka H."/>
            <person name="Wada T."/>
            <person name="Yamada M."/>
            <person name="Tabata S."/>
        </authorList>
    </citation>
    <scope>NUCLEOTIDE SEQUENCE [LARGE SCALE GENOMIC DNA]</scope>
    <source>
        <strain>JCM 10833 / BCRC 13528 / IAM 13628 / NBRC 14792 / USDA 110</strain>
    </source>
</reference>